<feature type="chain" id="PRO_0000263400" description="Ribulokinase">
    <location>
        <begin position="1"/>
        <end position="566"/>
    </location>
</feature>
<organism>
    <name type="scientific">Escherichia coli (strain UTI89 / UPEC)</name>
    <dbReference type="NCBI Taxonomy" id="364106"/>
    <lineage>
        <taxon>Bacteria</taxon>
        <taxon>Pseudomonadati</taxon>
        <taxon>Pseudomonadota</taxon>
        <taxon>Gammaproteobacteria</taxon>
        <taxon>Enterobacterales</taxon>
        <taxon>Enterobacteriaceae</taxon>
        <taxon>Escherichia</taxon>
    </lineage>
</organism>
<dbReference type="EC" id="2.7.1.16" evidence="1"/>
<dbReference type="EMBL" id="CP000243">
    <property type="protein sequence ID" value="ABE05578.1"/>
    <property type="molecule type" value="Genomic_DNA"/>
</dbReference>
<dbReference type="RefSeq" id="WP_000951841.1">
    <property type="nucleotide sequence ID" value="NZ_CP064825.1"/>
</dbReference>
<dbReference type="SMR" id="Q1RGD6"/>
<dbReference type="KEGG" id="eci:UTI89_C0068"/>
<dbReference type="HOGENOM" id="CLU_009281_9_1_6"/>
<dbReference type="UniPathway" id="UPA00145">
    <property type="reaction ID" value="UER00566"/>
</dbReference>
<dbReference type="Proteomes" id="UP000001952">
    <property type="component" value="Chromosome"/>
</dbReference>
<dbReference type="GO" id="GO:0005737">
    <property type="term" value="C:cytoplasm"/>
    <property type="evidence" value="ECO:0007669"/>
    <property type="project" value="TreeGrafter"/>
</dbReference>
<dbReference type="GO" id="GO:0005524">
    <property type="term" value="F:ATP binding"/>
    <property type="evidence" value="ECO:0007669"/>
    <property type="project" value="UniProtKB-KW"/>
</dbReference>
<dbReference type="GO" id="GO:0019150">
    <property type="term" value="F:D-ribulokinase activity"/>
    <property type="evidence" value="ECO:0007669"/>
    <property type="project" value="RHEA"/>
</dbReference>
<dbReference type="GO" id="GO:0008741">
    <property type="term" value="F:ribulokinase activity"/>
    <property type="evidence" value="ECO:0007669"/>
    <property type="project" value="UniProtKB-UniRule"/>
</dbReference>
<dbReference type="GO" id="GO:0019569">
    <property type="term" value="P:L-arabinose catabolic process to xylulose 5-phosphate"/>
    <property type="evidence" value="ECO:0007669"/>
    <property type="project" value="UniProtKB-UniRule"/>
</dbReference>
<dbReference type="CDD" id="cd07781">
    <property type="entry name" value="ASKHA_NBD_FGGY_L-RBK"/>
    <property type="match status" value="1"/>
</dbReference>
<dbReference type="Gene3D" id="1.20.58.2240">
    <property type="match status" value="1"/>
</dbReference>
<dbReference type="Gene3D" id="3.30.420.40">
    <property type="match status" value="1"/>
</dbReference>
<dbReference type="HAMAP" id="MF_00520">
    <property type="entry name" value="Ribulokinase"/>
    <property type="match status" value="1"/>
</dbReference>
<dbReference type="InterPro" id="IPR043129">
    <property type="entry name" value="ATPase_NBD"/>
</dbReference>
<dbReference type="InterPro" id="IPR018485">
    <property type="entry name" value="FGGY_C"/>
</dbReference>
<dbReference type="InterPro" id="IPR005929">
    <property type="entry name" value="Ribulokinase"/>
</dbReference>
<dbReference type="NCBIfam" id="TIGR01234">
    <property type="entry name" value="L-ribulokinase"/>
    <property type="match status" value="1"/>
</dbReference>
<dbReference type="NCBIfam" id="NF003154">
    <property type="entry name" value="PRK04123.1"/>
    <property type="match status" value="1"/>
</dbReference>
<dbReference type="PANTHER" id="PTHR43435:SF4">
    <property type="entry name" value="FGGY CARBOHYDRATE KINASE DOMAIN-CONTAINING PROTEIN"/>
    <property type="match status" value="1"/>
</dbReference>
<dbReference type="PANTHER" id="PTHR43435">
    <property type="entry name" value="RIBULOKINASE"/>
    <property type="match status" value="1"/>
</dbReference>
<dbReference type="Pfam" id="PF02782">
    <property type="entry name" value="FGGY_C"/>
    <property type="match status" value="1"/>
</dbReference>
<dbReference type="SUPFAM" id="SSF53067">
    <property type="entry name" value="Actin-like ATPase domain"/>
    <property type="match status" value="2"/>
</dbReference>
<gene>
    <name evidence="1" type="primary">araB</name>
    <name type="ordered locus">UTI89_C0068</name>
</gene>
<proteinExistence type="inferred from homology"/>
<evidence type="ECO:0000255" key="1">
    <source>
        <dbReference type="HAMAP-Rule" id="MF_00520"/>
    </source>
</evidence>
<name>ARAB_ECOUT</name>
<sequence length="566" mass="61196">MAIAIGLDFGSDSVRALAVDCATGEEIATSVEWYPRWQKGQFCDAPNNQFRHHPRDYIESMEAALKTVLAELSAEQRAAVVGIGVDTTGSTPAPIDADGNVLALRPEFAENPNAMFVLWKDHTAVEEAEEITRLCHAPGNVDYSRYIGGIYSSEWFWAKILHVTRQDSAVAQSAASWIELCDWVPALLSGTTRPQDIRRGRCSAGHKSLWHESWGGLPPASFFDELDPILNRHLPSPLFTDTWTADIPVGTLCPEWAQRLGLPESVVISGGAFDCHMGAVGAGAQPNALVKVIGTSTCDILIADKQSVGERAVKGICGQVDGSVVPGFIGLEAGQSAFGDIYAWFGRVLSWPLEQLAAQHPELKEQINASQKQLLPALTEAWAKNPSLDHLPVVLDWFNGRRTPNANQRLKGVITDLNLATDAPLLFGGLIAATAFGARAIMECFTDQGIAVNNVMALGGIARKNQVIMQACCDVLNRPLQIVASDQCCALGAAIFAAVAAKVHADIPSAQQKMASAVEKTLQPRSEQAQRFEQLYRRYQQWAMSAEQHYPPTSAPAQAAQAVPTL</sequence>
<keyword id="KW-0054">Arabinose catabolism</keyword>
<keyword id="KW-0067">ATP-binding</keyword>
<keyword id="KW-0119">Carbohydrate metabolism</keyword>
<keyword id="KW-0418">Kinase</keyword>
<keyword id="KW-0547">Nucleotide-binding</keyword>
<keyword id="KW-0808">Transferase</keyword>
<comment type="catalytic activity">
    <reaction evidence="1">
        <text>D-ribulose + ATP = D-ribulose 5-phosphate + ADP + H(+)</text>
        <dbReference type="Rhea" id="RHEA:17601"/>
        <dbReference type="ChEBI" id="CHEBI:15378"/>
        <dbReference type="ChEBI" id="CHEBI:17173"/>
        <dbReference type="ChEBI" id="CHEBI:30616"/>
        <dbReference type="ChEBI" id="CHEBI:58121"/>
        <dbReference type="ChEBI" id="CHEBI:456216"/>
        <dbReference type="EC" id="2.7.1.16"/>
    </reaction>
</comment>
<comment type="catalytic activity">
    <reaction evidence="1">
        <text>L-ribulose + ATP = L-ribulose 5-phosphate + ADP + H(+)</text>
        <dbReference type="Rhea" id="RHEA:22072"/>
        <dbReference type="ChEBI" id="CHEBI:15378"/>
        <dbReference type="ChEBI" id="CHEBI:16880"/>
        <dbReference type="ChEBI" id="CHEBI:30616"/>
        <dbReference type="ChEBI" id="CHEBI:58226"/>
        <dbReference type="ChEBI" id="CHEBI:456216"/>
        <dbReference type="EC" id="2.7.1.16"/>
    </reaction>
</comment>
<comment type="pathway">
    <text evidence="1">Carbohydrate degradation; L-arabinose degradation via L-ribulose; D-xylulose 5-phosphate from L-arabinose (bacterial route): step 2/3.</text>
</comment>
<comment type="similarity">
    <text evidence="1">Belongs to the ribulokinase family.</text>
</comment>
<protein>
    <recommendedName>
        <fullName evidence="1">Ribulokinase</fullName>
        <ecNumber evidence="1">2.7.1.16</ecNumber>
    </recommendedName>
</protein>
<reference key="1">
    <citation type="journal article" date="2006" name="Proc. Natl. Acad. Sci. U.S.A.">
        <title>Identification of genes subject to positive selection in uropathogenic strains of Escherichia coli: a comparative genomics approach.</title>
        <authorList>
            <person name="Chen S.L."/>
            <person name="Hung C.-S."/>
            <person name="Xu J."/>
            <person name="Reigstad C.S."/>
            <person name="Magrini V."/>
            <person name="Sabo A."/>
            <person name="Blasiar D."/>
            <person name="Bieri T."/>
            <person name="Meyer R.R."/>
            <person name="Ozersky P."/>
            <person name="Armstrong J.R."/>
            <person name="Fulton R.S."/>
            <person name="Latreille J.P."/>
            <person name="Spieth J."/>
            <person name="Hooton T.M."/>
            <person name="Mardis E.R."/>
            <person name="Hultgren S.J."/>
            <person name="Gordon J.I."/>
        </authorList>
    </citation>
    <scope>NUCLEOTIDE SEQUENCE [LARGE SCALE GENOMIC DNA]</scope>
    <source>
        <strain>UTI89 / UPEC</strain>
    </source>
</reference>
<accession>Q1RGD6</accession>